<dbReference type="EC" id="2.1.1.148" evidence="1"/>
<dbReference type="EMBL" id="CP000656">
    <property type="protein sequence ID" value="ABP46472.1"/>
    <property type="molecule type" value="Genomic_DNA"/>
</dbReference>
<dbReference type="SMR" id="A4TCJ4"/>
<dbReference type="STRING" id="350054.Mflv_4001"/>
<dbReference type="KEGG" id="mgi:Mflv_4001"/>
<dbReference type="eggNOG" id="COG1351">
    <property type="taxonomic scope" value="Bacteria"/>
</dbReference>
<dbReference type="HOGENOM" id="CLU_077585_1_0_11"/>
<dbReference type="OrthoDB" id="9780625at2"/>
<dbReference type="UniPathway" id="UPA00575"/>
<dbReference type="GO" id="GO:0050660">
    <property type="term" value="F:flavin adenine dinucleotide binding"/>
    <property type="evidence" value="ECO:0007669"/>
    <property type="project" value="InterPro"/>
</dbReference>
<dbReference type="GO" id="GO:0070402">
    <property type="term" value="F:NADPH binding"/>
    <property type="evidence" value="ECO:0007669"/>
    <property type="project" value="TreeGrafter"/>
</dbReference>
<dbReference type="GO" id="GO:0050797">
    <property type="term" value="F:thymidylate synthase (FAD) activity"/>
    <property type="evidence" value="ECO:0007669"/>
    <property type="project" value="UniProtKB-UniRule"/>
</dbReference>
<dbReference type="GO" id="GO:0004799">
    <property type="term" value="F:thymidylate synthase activity"/>
    <property type="evidence" value="ECO:0007669"/>
    <property type="project" value="TreeGrafter"/>
</dbReference>
<dbReference type="GO" id="GO:0006231">
    <property type="term" value="P:dTMP biosynthetic process"/>
    <property type="evidence" value="ECO:0007669"/>
    <property type="project" value="UniProtKB-UniRule"/>
</dbReference>
<dbReference type="GO" id="GO:0006235">
    <property type="term" value="P:dTTP biosynthetic process"/>
    <property type="evidence" value="ECO:0007669"/>
    <property type="project" value="UniProtKB-UniRule"/>
</dbReference>
<dbReference type="GO" id="GO:0032259">
    <property type="term" value="P:methylation"/>
    <property type="evidence" value="ECO:0007669"/>
    <property type="project" value="UniProtKB-KW"/>
</dbReference>
<dbReference type="CDD" id="cd20175">
    <property type="entry name" value="ThyX"/>
    <property type="match status" value="1"/>
</dbReference>
<dbReference type="Gene3D" id="3.30.1360.170">
    <property type="match status" value="1"/>
</dbReference>
<dbReference type="Gene3D" id="3.30.70.3180">
    <property type="match status" value="1"/>
</dbReference>
<dbReference type="Gene3D" id="6.10.140.450">
    <property type="match status" value="1"/>
</dbReference>
<dbReference type="HAMAP" id="MF_01408">
    <property type="entry name" value="ThyX"/>
    <property type="match status" value="1"/>
</dbReference>
<dbReference type="InterPro" id="IPR003669">
    <property type="entry name" value="Thymidylate_synthase_ThyX"/>
</dbReference>
<dbReference type="InterPro" id="IPR036098">
    <property type="entry name" value="Thymidylate_synthase_ThyX_sf"/>
</dbReference>
<dbReference type="NCBIfam" id="TIGR02170">
    <property type="entry name" value="thyX"/>
    <property type="match status" value="1"/>
</dbReference>
<dbReference type="PANTHER" id="PTHR34934">
    <property type="entry name" value="FLAVIN-DEPENDENT THYMIDYLATE SYNTHASE"/>
    <property type="match status" value="1"/>
</dbReference>
<dbReference type="PANTHER" id="PTHR34934:SF1">
    <property type="entry name" value="FLAVIN-DEPENDENT THYMIDYLATE SYNTHASE"/>
    <property type="match status" value="1"/>
</dbReference>
<dbReference type="Pfam" id="PF02511">
    <property type="entry name" value="Thy1"/>
    <property type="match status" value="1"/>
</dbReference>
<dbReference type="SUPFAM" id="SSF69796">
    <property type="entry name" value="Thymidylate synthase-complementing protein Thy1"/>
    <property type="match status" value="1"/>
</dbReference>
<dbReference type="PROSITE" id="PS51331">
    <property type="entry name" value="THYX"/>
    <property type="match status" value="1"/>
</dbReference>
<proteinExistence type="inferred from homology"/>
<keyword id="KW-0274">FAD</keyword>
<keyword id="KW-0285">Flavoprotein</keyword>
<keyword id="KW-0489">Methyltransferase</keyword>
<keyword id="KW-0521">NADP</keyword>
<keyword id="KW-0545">Nucleotide biosynthesis</keyword>
<keyword id="KW-0808">Transferase</keyword>
<protein>
    <recommendedName>
        <fullName evidence="1">Flavin-dependent thymidylate synthase</fullName>
        <shortName evidence="1">FDTS</shortName>
        <ecNumber evidence="1">2.1.1.148</ecNumber>
    </recommendedName>
    <alternativeName>
        <fullName evidence="1">FAD-dependent thymidylate synthase</fullName>
    </alternativeName>
    <alternativeName>
        <fullName evidence="1">Thymidylate synthase ThyX</fullName>
        <shortName evidence="1">TS</shortName>
        <shortName evidence="1">TSase</shortName>
    </alternativeName>
</protein>
<evidence type="ECO:0000255" key="1">
    <source>
        <dbReference type="HAMAP-Rule" id="MF_01408"/>
    </source>
</evidence>
<evidence type="ECO:0000255" key="2">
    <source>
        <dbReference type="PROSITE-ProRule" id="PRU00661"/>
    </source>
</evidence>
<accession>A4TCJ4</accession>
<gene>
    <name evidence="1" type="primary">thyX</name>
    <name type="ordered locus">Mflv_4001</name>
</gene>
<comment type="function">
    <text evidence="1">Catalyzes the reductive methylation of 2'-deoxyuridine-5'-monophosphate (dUMP) to 2'-deoxythymidine-5'-monophosphate (dTMP) while utilizing 5,10-methylenetetrahydrofolate (mTHF) as the methyl donor, and NADPH and FADH(2) as the reductant.</text>
</comment>
<comment type="catalytic activity">
    <reaction evidence="1">
        <text>dUMP + (6R)-5,10-methylene-5,6,7,8-tetrahydrofolate + NADPH + H(+) = dTMP + (6S)-5,6,7,8-tetrahydrofolate + NADP(+)</text>
        <dbReference type="Rhea" id="RHEA:29043"/>
        <dbReference type="ChEBI" id="CHEBI:15378"/>
        <dbReference type="ChEBI" id="CHEBI:15636"/>
        <dbReference type="ChEBI" id="CHEBI:57453"/>
        <dbReference type="ChEBI" id="CHEBI:57783"/>
        <dbReference type="ChEBI" id="CHEBI:58349"/>
        <dbReference type="ChEBI" id="CHEBI:63528"/>
        <dbReference type="ChEBI" id="CHEBI:246422"/>
        <dbReference type="EC" id="2.1.1.148"/>
    </reaction>
</comment>
<comment type="cofactor">
    <cofactor evidence="1">
        <name>FAD</name>
        <dbReference type="ChEBI" id="CHEBI:57692"/>
    </cofactor>
    <text evidence="1">Binds 4 FAD per tetramer. Each FAD binding site is formed by three monomers.</text>
</comment>
<comment type="pathway">
    <text evidence="1">Pyrimidine metabolism; dTTP biosynthesis.</text>
</comment>
<comment type="subunit">
    <text evidence="1">Homotetramer.</text>
</comment>
<comment type="similarity">
    <text evidence="1">Belongs to the thymidylate synthase ThyX family.</text>
</comment>
<feature type="chain" id="PRO_1000184592" description="Flavin-dependent thymidylate synthase">
    <location>
        <begin position="1"/>
        <end position="250"/>
    </location>
</feature>
<feature type="domain" description="ThyX" evidence="2">
    <location>
        <begin position="7"/>
        <end position="233"/>
    </location>
</feature>
<feature type="short sequence motif" description="ThyX motif" evidence="1">
    <location>
        <begin position="95"/>
        <end position="105"/>
    </location>
</feature>
<feature type="active site" description="Involved in ionization of N3 of dUMP, leading to its activation" evidence="1">
    <location>
        <position position="199"/>
    </location>
</feature>
<feature type="binding site" evidence="1">
    <location>
        <position position="71"/>
    </location>
    <ligand>
        <name>FAD</name>
        <dbReference type="ChEBI" id="CHEBI:57692"/>
        <note>ligand shared between neighboring subunits</note>
    </ligand>
</feature>
<feature type="binding site" evidence="1">
    <location>
        <begin position="92"/>
        <end position="95"/>
    </location>
    <ligand>
        <name>dUMP</name>
        <dbReference type="ChEBI" id="CHEBI:246422"/>
        <note>ligand shared between dimeric partners</note>
    </ligand>
</feature>
<feature type="binding site" evidence="1">
    <location>
        <begin position="95"/>
        <end position="97"/>
    </location>
    <ligand>
        <name>FAD</name>
        <dbReference type="ChEBI" id="CHEBI:57692"/>
        <note>ligand shared between neighboring subunits</note>
    </ligand>
</feature>
<feature type="binding site" description="in other chain" evidence="1">
    <location>
        <begin position="103"/>
        <end position="107"/>
    </location>
    <ligand>
        <name>dUMP</name>
        <dbReference type="ChEBI" id="CHEBI:246422"/>
        <note>ligand shared between dimeric partners</note>
    </ligand>
</feature>
<feature type="binding site" evidence="1">
    <location>
        <position position="103"/>
    </location>
    <ligand>
        <name>FAD</name>
        <dbReference type="ChEBI" id="CHEBI:57692"/>
        <note>ligand shared between neighboring subunits</note>
    </ligand>
</feature>
<feature type="binding site" description="in other chain" evidence="1">
    <location>
        <position position="172"/>
    </location>
    <ligand>
        <name>dUMP</name>
        <dbReference type="ChEBI" id="CHEBI:246422"/>
        <note>ligand shared between dimeric partners</note>
    </ligand>
</feature>
<feature type="binding site" evidence="1">
    <location>
        <begin position="188"/>
        <end position="190"/>
    </location>
    <ligand>
        <name>FAD</name>
        <dbReference type="ChEBI" id="CHEBI:57692"/>
        <note>ligand shared between neighboring subunits</note>
    </ligand>
</feature>
<feature type="binding site" evidence="1">
    <location>
        <position position="194"/>
    </location>
    <ligand>
        <name>FAD</name>
        <dbReference type="ChEBI" id="CHEBI:57692"/>
        <note>ligand shared between neighboring subunits</note>
    </ligand>
</feature>
<feature type="binding site" evidence="1">
    <location>
        <position position="199"/>
    </location>
    <ligand>
        <name>dUMP</name>
        <dbReference type="ChEBI" id="CHEBI:246422"/>
        <note>ligand shared between dimeric partners</note>
    </ligand>
</feature>
<name>THYX_MYCGI</name>
<reference key="1">
    <citation type="submission" date="2007-04" db="EMBL/GenBank/DDBJ databases">
        <title>Complete sequence of chromosome of Mycobacterium gilvum PYR-GCK.</title>
        <authorList>
            <consortium name="US DOE Joint Genome Institute"/>
            <person name="Copeland A."/>
            <person name="Lucas S."/>
            <person name="Lapidus A."/>
            <person name="Barry K."/>
            <person name="Detter J.C."/>
            <person name="Glavina del Rio T."/>
            <person name="Hammon N."/>
            <person name="Israni S."/>
            <person name="Dalin E."/>
            <person name="Tice H."/>
            <person name="Pitluck S."/>
            <person name="Chain P."/>
            <person name="Malfatti S."/>
            <person name="Shin M."/>
            <person name="Vergez L."/>
            <person name="Schmutz J."/>
            <person name="Larimer F."/>
            <person name="Land M."/>
            <person name="Hauser L."/>
            <person name="Kyrpides N."/>
            <person name="Mikhailova N."/>
            <person name="Miller C."/>
            <person name="Richardson P."/>
        </authorList>
    </citation>
    <scope>NUCLEOTIDE SEQUENCE [LARGE SCALE GENOMIC DNA]</scope>
    <source>
        <strain>PYR-GCK</strain>
    </source>
</reference>
<organism>
    <name type="scientific">Mycolicibacterium gilvum (strain PYR-GCK)</name>
    <name type="common">Mycobacterium gilvum (strain PYR-GCK)</name>
    <dbReference type="NCBI Taxonomy" id="350054"/>
    <lineage>
        <taxon>Bacteria</taxon>
        <taxon>Bacillati</taxon>
        <taxon>Actinomycetota</taxon>
        <taxon>Actinomycetes</taxon>
        <taxon>Mycobacteriales</taxon>
        <taxon>Mycobacteriaceae</taxon>
        <taxon>Mycolicibacterium</taxon>
    </lineage>
</organism>
<sequence length="250" mass="27604">MAEIAPLRVQLIAKTEFSAPPDVEWSTDADGGAALVEFAGRACYQSWSKPNPRTATNATYVRHIIDVGHFSVLEHASVSFYITGLSRSCTHELIRHRHFSYSQLSQRYVPENDAEVVAPPGIEDDPELLALFTAATDASRAAYTELLNRLEAKLADQGTSTLRRKQARQAARAVLPNATETRIVVTGNYRAWRHFIAMRASEHADVEIRRLAIECLRRLVAVAPQVFSDFEITALADGTEVATSPLATEV</sequence>